<reference key="1">
    <citation type="journal article" date="2002" name="Nat. Biotechnol.">
        <title>Genome sequence of the dissimilatory metal ion-reducing bacterium Shewanella oneidensis.</title>
        <authorList>
            <person name="Heidelberg J.F."/>
            <person name="Paulsen I.T."/>
            <person name="Nelson K.E."/>
            <person name="Gaidos E.J."/>
            <person name="Nelson W.C."/>
            <person name="Read T.D."/>
            <person name="Eisen J.A."/>
            <person name="Seshadri R."/>
            <person name="Ward N.L."/>
            <person name="Methe B.A."/>
            <person name="Clayton R.A."/>
            <person name="Meyer T."/>
            <person name="Tsapin A."/>
            <person name="Scott J."/>
            <person name="Beanan M.J."/>
            <person name="Brinkac L.M."/>
            <person name="Daugherty S.C."/>
            <person name="DeBoy R.T."/>
            <person name="Dodson R.J."/>
            <person name="Durkin A.S."/>
            <person name="Haft D.H."/>
            <person name="Kolonay J.F."/>
            <person name="Madupu R."/>
            <person name="Peterson J.D."/>
            <person name="Umayam L.A."/>
            <person name="White O."/>
            <person name="Wolf A.M."/>
            <person name="Vamathevan J.J."/>
            <person name="Weidman J.F."/>
            <person name="Impraim M."/>
            <person name="Lee K."/>
            <person name="Berry K.J."/>
            <person name="Lee C."/>
            <person name="Mueller J."/>
            <person name="Khouri H.M."/>
            <person name="Gill J."/>
            <person name="Utterback T.R."/>
            <person name="McDonald L.A."/>
            <person name="Feldblyum T.V."/>
            <person name="Smith H.O."/>
            <person name="Venter J.C."/>
            <person name="Nealson K.H."/>
            <person name="Fraser C.M."/>
        </authorList>
    </citation>
    <scope>NUCLEOTIDE SEQUENCE [LARGE SCALE GENOMIC DNA]</scope>
    <source>
        <strain>ATCC 700550 / JCM 31522 / CIP 106686 / LMG 19005 / NCIMB 14063 / MR-1</strain>
    </source>
</reference>
<gene>
    <name evidence="1" type="primary">rlmG</name>
    <name type="ordered locus">SO_1097</name>
</gene>
<keyword id="KW-0963">Cytoplasm</keyword>
<keyword id="KW-0489">Methyltransferase</keyword>
<keyword id="KW-1185">Reference proteome</keyword>
<keyword id="KW-0698">rRNA processing</keyword>
<keyword id="KW-0949">S-adenosyl-L-methionine</keyword>
<keyword id="KW-0808">Transferase</keyword>
<name>RLMG_SHEON</name>
<evidence type="ECO:0000255" key="1">
    <source>
        <dbReference type="HAMAP-Rule" id="MF_01859"/>
    </source>
</evidence>
<accession>Q8EHW5</accession>
<sequence>MTTQFSVAGIELELFRYPASQESNLQAWDAADEHLINSLIEGGQIAVPTAIINDSFGALSCALSRINPNWPLRVETDARTSFLGTEQNHHRNQLPMDNLQWFTSRDTLPKDVALVLMKLPKNLTYFAHQLMRLSQILPAGCRVLVGAKAKSINSSLLALFAKHLGPANASLAWKKTRVITCISDGKPRALPNGITWNIPEFNLTISNLSNVFAANKLDIGARIMLDNLPQGKFNTVVDLGCGNGVLGLRAAQLYPNADIHFIDDSEMAVASAKANWTMNQLAEGKGHFHWDDCMTHLPEDIEPDLVLCNPPFHQGEAITDHIAWQMFLDARRRLKNGGILHIVGNRHLAYHVKLQRLFKNCTTVASNGKFVILQAQK</sequence>
<organism>
    <name type="scientific">Shewanella oneidensis (strain ATCC 700550 / JCM 31522 / CIP 106686 / LMG 19005 / NCIMB 14063 / MR-1)</name>
    <dbReference type="NCBI Taxonomy" id="211586"/>
    <lineage>
        <taxon>Bacteria</taxon>
        <taxon>Pseudomonadati</taxon>
        <taxon>Pseudomonadota</taxon>
        <taxon>Gammaproteobacteria</taxon>
        <taxon>Alteromonadales</taxon>
        <taxon>Shewanellaceae</taxon>
        <taxon>Shewanella</taxon>
    </lineage>
</organism>
<comment type="function">
    <text evidence="1">Specifically methylates the guanine in position 1835 (m2G1835) of 23S rRNA.</text>
</comment>
<comment type="catalytic activity">
    <reaction evidence="1">
        <text>guanosine(1835) in 23S rRNA + S-adenosyl-L-methionine = N(2)-methylguanosine(1835) in 23S rRNA + S-adenosyl-L-homocysteine + H(+)</text>
        <dbReference type="Rhea" id="RHEA:42744"/>
        <dbReference type="Rhea" id="RHEA-COMP:10217"/>
        <dbReference type="Rhea" id="RHEA-COMP:10218"/>
        <dbReference type="ChEBI" id="CHEBI:15378"/>
        <dbReference type="ChEBI" id="CHEBI:57856"/>
        <dbReference type="ChEBI" id="CHEBI:59789"/>
        <dbReference type="ChEBI" id="CHEBI:74269"/>
        <dbReference type="ChEBI" id="CHEBI:74481"/>
        <dbReference type="EC" id="2.1.1.174"/>
    </reaction>
</comment>
<comment type="subcellular location">
    <subcellularLocation>
        <location evidence="1">Cytoplasm</location>
    </subcellularLocation>
</comment>
<comment type="similarity">
    <text evidence="1">Belongs to the methyltransferase superfamily. RlmG family.</text>
</comment>
<dbReference type="EC" id="2.1.1.174" evidence="1"/>
<dbReference type="EMBL" id="AE014299">
    <property type="protein sequence ID" value="AAN54168.1"/>
    <property type="molecule type" value="Genomic_DNA"/>
</dbReference>
<dbReference type="RefSeq" id="NP_716723.1">
    <property type="nucleotide sequence ID" value="NC_004347.2"/>
</dbReference>
<dbReference type="RefSeq" id="WP_011071341.1">
    <property type="nucleotide sequence ID" value="NC_004347.2"/>
</dbReference>
<dbReference type="SMR" id="Q8EHW5"/>
<dbReference type="STRING" id="211586.SO_1097"/>
<dbReference type="PaxDb" id="211586-SO_1097"/>
<dbReference type="KEGG" id="son:SO_1097"/>
<dbReference type="PATRIC" id="fig|211586.12.peg.1051"/>
<dbReference type="eggNOG" id="COG2813">
    <property type="taxonomic scope" value="Bacteria"/>
</dbReference>
<dbReference type="HOGENOM" id="CLU_040288_4_0_6"/>
<dbReference type="OrthoDB" id="29650at2"/>
<dbReference type="PhylomeDB" id="Q8EHW5"/>
<dbReference type="BioCyc" id="SONE211586:G1GMP-1009-MONOMER"/>
<dbReference type="Proteomes" id="UP000008186">
    <property type="component" value="Chromosome"/>
</dbReference>
<dbReference type="GO" id="GO:0005737">
    <property type="term" value="C:cytoplasm"/>
    <property type="evidence" value="ECO:0007669"/>
    <property type="project" value="UniProtKB-SubCell"/>
</dbReference>
<dbReference type="GO" id="GO:0052916">
    <property type="term" value="F:23S rRNA (guanine(1835)-N(2))-methyltransferase activity"/>
    <property type="evidence" value="ECO:0007669"/>
    <property type="project" value="UniProtKB-EC"/>
</dbReference>
<dbReference type="GO" id="GO:0003676">
    <property type="term" value="F:nucleic acid binding"/>
    <property type="evidence" value="ECO:0007669"/>
    <property type="project" value="InterPro"/>
</dbReference>
<dbReference type="GO" id="GO:0008990">
    <property type="term" value="F:rRNA (guanine-N2-)-methyltransferase activity"/>
    <property type="evidence" value="ECO:0000318"/>
    <property type="project" value="GO_Central"/>
</dbReference>
<dbReference type="GO" id="GO:0070475">
    <property type="term" value="P:rRNA base methylation"/>
    <property type="evidence" value="ECO:0000318"/>
    <property type="project" value="GO_Central"/>
</dbReference>
<dbReference type="CDD" id="cd02440">
    <property type="entry name" value="AdoMet_MTases"/>
    <property type="match status" value="1"/>
</dbReference>
<dbReference type="Gene3D" id="3.40.50.150">
    <property type="entry name" value="Vaccinia Virus protein VP39"/>
    <property type="match status" value="2"/>
</dbReference>
<dbReference type="HAMAP" id="MF_01859">
    <property type="entry name" value="23SrRNA_methyltr_G"/>
    <property type="match status" value="1"/>
</dbReference>
<dbReference type="InterPro" id="IPR002052">
    <property type="entry name" value="DNA_methylase_N6_adenine_CS"/>
</dbReference>
<dbReference type="InterPro" id="IPR017237">
    <property type="entry name" value="rRNA_m2G-MeTrfase_RlmG"/>
</dbReference>
<dbReference type="InterPro" id="IPR046977">
    <property type="entry name" value="RsmC/RlmG"/>
</dbReference>
<dbReference type="InterPro" id="IPR029063">
    <property type="entry name" value="SAM-dependent_MTases_sf"/>
</dbReference>
<dbReference type="InterPro" id="IPR007848">
    <property type="entry name" value="Small_mtfrase_dom"/>
</dbReference>
<dbReference type="PANTHER" id="PTHR47816:SF5">
    <property type="entry name" value="RIBOSOMAL RNA LARGE SUBUNIT METHYLTRANSFERASE G"/>
    <property type="match status" value="1"/>
</dbReference>
<dbReference type="PANTHER" id="PTHR47816">
    <property type="entry name" value="RIBOSOMAL RNA SMALL SUBUNIT METHYLTRANSFERASE C"/>
    <property type="match status" value="1"/>
</dbReference>
<dbReference type="Pfam" id="PF05175">
    <property type="entry name" value="MTS"/>
    <property type="match status" value="1"/>
</dbReference>
<dbReference type="PIRSF" id="PIRSF037565">
    <property type="entry name" value="RRNA_m2G_Mtase_RsmD_prd"/>
    <property type="match status" value="1"/>
</dbReference>
<dbReference type="SUPFAM" id="SSF53335">
    <property type="entry name" value="S-adenosyl-L-methionine-dependent methyltransferases"/>
    <property type="match status" value="1"/>
</dbReference>
<proteinExistence type="inferred from homology"/>
<feature type="chain" id="PRO_0000366512" description="Ribosomal RNA large subunit methyltransferase G">
    <location>
        <begin position="1"/>
        <end position="377"/>
    </location>
</feature>
<protein>
    <recommendedName>
        <fullName evidence="1">Ribosomal RNA large subunit methyltransferase G</fullName>
        <ecNumber evidence="1">2.1.1.174</ecNumber>
    </recommendedName>
    <alternativeName>
        <fullName evidence="1">23S rRNA m2G1835 methyltransferase</fullName>
    </alternativeName>
    <alternativeName>
        <fullName evidence="1">rRNA (guanine-N(2)-)-methyltransferase RlmG</fullName>
    </alternativeName>
</protein>